<sequence>MAAVDRFNLLYREISRSCSVYIEALAIVGAWYTVRKCLTLVFNTYSMIRLHALPKLVGEIDIVKRYGRWAVVTGSTDGIGKAYAEELAKRGVNIILISRSKEKLEAVSRSISETYKVETDFIVADFSKGREAYQAIKEGLKDREIGILVNNVGLFYTYPDYFTNLSEDMLWDMINVNIASANMMVHIVLPGMVEKRKGAIVNVSSASCCQPTPMLTTYGASKAYLDYFSRALYYEYASKGIFVQSLTPFVIATRMVSCSRVTSKRSFFFPSAEEYASHAISTLGLSKRTPGYWKHSIEFTLGERLPEWIWAWFAQYFCRIIRKEALTHKAK</sequence>
<name>HSDL1_CHICK</name>
<evidence type="ECO:0000250" key="1"/>
<evidence type="ECO:0000305" key="2"/>
<organism>
    <name type="scientific">Gallus gallus</name>
    <name type="common">Chicken</name>
    <dbReference type="NCBI Taxonomy" id="9031"/>
    <lineage>
        <taxon>Eukaryota</taxon>
        <taxon>Metazoa</taxon>
        <taxon>Chordata</taxon>
        <taxon>Craniata</taxon>
        <taxon>Vertebrata</taxon>
        <taxon>Euteleostomi</taxon>
        <taxon>Archelosauria</taxon>
        <taxon>Archosauria</taxon>
        <taxon>Dinosauria</taxon>
        <taxon>Saurischia</taxon>
        <taxon>Theropoda</taxon>
        <taxon>Coelurosauria</taxon>
        <taxon>Aves</taxon>
        <taxon>Neognathae</taxon>
        <taxon>Galloanserae</taxon>
        <taxon>Galliformes</taxon>
        <taxon>Phasianidae</taxon>
        <taxon>Phasianinae</taxon>
        <taxon>Gallus</taxon>
    </lineage>
</organism>
<feature type="chain" id="PRO_0000313675" description="Hydroxysteroid dehydrogenase-like protein 1">
    <location>
        <begin position="1"/>
        <end position="331"/>
    </location>
</feature>
<feature type="region of interest" description="Required for mitochondria translocation" evidence="1">
    <location>
        <begin position="2"/>
        <end position="82"/>
    </location>
</feature>
<feature type="active site" description="Proton acceptor" evidence="1">
    <location>
        <position position="218"/>
    </location>
</feature>
<feature type="binding site" evidence="1">
    <location>
        <begin position="74"/>
        <end position="80"/>
    </location>
    <ligand>
        <name>NADP(+)</name>
        <dbReference type="ChEBI" id="CHEBI:58349"/>
    </ligand>
</feature>
<feature type="binding site" evidence="1">
    <location>
        <position position="125"/>
    </location>
    <ligand>
        <name>NADP(+)</name>
        <dbReference type="ChEBI" id="CHEBI:58349"/>
    </ligand>
</feature>
<feature type="binding site" evidence="1">
    <location>
        <position position="205"/>
    </location>
    <ligand>
        <name>substrate</name>
    </ligand>
</feature>
<feature type="binding site" evidence="1">
    <location>
        <position position="222"/>
    </location>
    <ligand>
        <name>NADP(+)</name>
        <dbReference type="ChEBI" id="CHEBI:58349"/>
    </ligand>
</feature>
<comment type="function">
    <text evidence="1">May catalyze the metabolism of steroid hormones and thus play an important role in sex differentiation, the emergence and maintenance of the secondary sexual characters, and the regulation of endocrine.</text>
</comment>
<comment type="subcellular location">
    <subcellularLocation>
        <location evidence="1">Mitochondrion</location>
    </subcellularLocation>
</comment>
<comment type="similarity">
    <text evidence="2">Belongs to the short-chain dehydrogenases/reductases (SDR) family. 17-beta-HSD 3 subfamily.</text>
</comment>
<keyword id="KW-0444">Lipid biosynthesis</keyword>
<keyword id="KW-0443">Lipid metabolism</keyword>
<keyword id="KW-0496">Mitochondrion</keyword>
<keyword id="KW-0521">NADP</keyword>
<keyword id="KW-0560">Oxidoreductase</keyword>
<keyword id="KW-1185">Reference proteome</keyword>
<keyword id="KW-0752">Steroid biosynthesis</keyword>
<protein>
    <recommendedName>
        <fullName>Hydroxysteroid dehydrogenase-like protein 1</fullName>
        <ecNumber>1.1.1.-</ecNumber>
    </recommendedName>
</protein>
<dbReference type="EC" id="1.1.1.-"/>
<dbReference type="EMBL" id="AJ720466">
    <property type="protein sequence ID" value="CAG32125.1"/>
    <property type="molecule type" value="mRNA"/>
</dbReference>
<dbReference type="RefSeq" id="NP_001005837.1">
    <property type="nucleotide sequence ID" value="NM_001005837.1"/>
</dbReference>
<dbReference type="SMR" id="Q5ZJG8"/>
<dbReference type="FunCoup" id="Q5ZJG8">
    <property type="interactions" value="578"/>
</dbReference>
<dbReference type="STRING" id="9031.ENSGALP00000005167"/>
<dbReference type="GeneID" id="415703"/>
<dbReference type="KEGG" id="gga:415703"/>
<dbReference type="CTD" id="83693"/>
<dbReference type="VEuPathDB" id="HostDB:geneid_415703"/>
<dbReference type="InParanoid" id="Q5ZJG8"/>
<dbReference type="OrthoDB" id="5545019at2759"/>
<dbReference type="PhylomeDB" id="Q5ZJG8"/>
<dbReference type="PRO" id="PR:Q5ZJG8"/>
<dbReference type="Proteomes" id="UP000000539">
    <property type="component" value="Unassembled WGS sequence"/>
</dbReference>
<dbReference type="GO" id="GO:0005783">
    <property type="term" value="C:endoplasmic reticulum"/>
    <property type="evidence" value="ECO:0000318"/>
    <property type="project" value="GO_Central"/>
</dbReference>
<dbReference type="GO" id="GO:0005739">
    <property type="term" value="C:mitochondrion"/>
    <property type="evidence" value="ECO:0007669"/>
    <property type="project" value="UniProtKB-SubCell"/>
</dbReference>
<dbReference type="GO" id="GO:0016491">
    <property type="term" value="F:oxidoreductase activity"/>
    <property type="evidence" value="ECO:0007669"/>
    <property type="project" value="UniProtKB-KW"/>
</dbReference>
<dbReference type="GO" id="GO:0030497">
    <property type="term" value="P:fatty acid elongation"/>
    <property type="evidence" value="ECO:0000318"/>
    <property type="project" value="GO_Central"/>
</dbReference>
<dbReference type="GO" id="GO:0006694">
    <property type="term" value="P:steroid biosynthetic process"/>
    <property type="evidence" value="ECO:0007669"/>
    <property type="project" value="UniProtKB-KW"/>
</dbReference>
<dbReference type="CDD" id="cd05356">
    <property type="entry name" value="17beta-HSD1_like_SDR_c"/>
    <property type="match status" value="1"/>
</dbReference>
<dbReference type="FunFam" id="3.40.50.720:FF:000137">
    <property type="entry name" value="Hydroxysteroid (17-beta) dehydrogenase 3"/>
    <property type="match status" value="1"/>
</dbReference>
<dbReference type="Gene3D" id="3.40.50.720">
    <property type="entry name" value="NAD(P)-binding Rossmann-like Domain"/>
    <property type="match status" value="1"/>
</dbReference>
<dbReference type="InterPro" id="IPR052149">
    <property type="entry name" value="17-beta-HSD3-like"/>
</dbReference>
<dbReference type="InterPro" id="IPR036291">
    <property type="entry name" value="NAD(P)-bd_dom_sf"/>
</dbReference>
<dbReference type="InterPro" id="IPR002347">
    <property type="entry name" value="SDR_fam"/>
</dbReference>
<dbReference type="PANTHER" id="PTHR44889">
    <property type="entry name" value="INACTIVE HYDROXYSTEROID DEHYDROGENASE-LIKE PROTEIN 1"/>
    <property type="match status" value="1"/>
</dbReference>
<dbReference type="PANTHER" id="PTHR44889:SF1">
    <property type="entry name" value="INACTIVE HYDROXYSTEROID DEHYDROGENASE-LIKE PROTEIN 1"/>
    <property type="match status" value="1"/>
</dbReference>
<dbReference type="Pfam" id="PF00106">
    <property type="entry name" value="adh_short"/>
    <property type="match status" value="1"/>
</dbReference>
<dbReference type="PIRSF" id="PIRSF000126">
    <property type="entry name" value="11-beta-HSD1"/>
    <property type="match status" value="1"/>
</dbReference>
<dbReference type="PRINTS" id="PR00081">
    <property type="entry name" value="GDHRDH"/>
</dbReference>
<dbReference type="PRINTS" id="PR00080">
    <property type="entry name" value="SDRFAMILY"/>
</dbReference>
<dbReference type="SUPFAM" id="SSF51735">
    <property type="entry name" value="NAD(P)-binding Rossmann-fold domains"/>
    <property type="match status" value="1"/>
</dbReference>
<proteinExistence type="evidence at transcript level"/>
<gene>
    <name type="primary">HSDL1</name>
    <name type="ORF">RCJMB04_18f7</name>
</gene>
<reference key="1">
    <citation type="journal article" date="2005" name="Genome Biol.">
        <title>Full-length cDNAs from chicken bursal lymphocytes to facilitate gene function analysis.</title>
        <authorList>
            <person name="Caldwell R.B."/>
            <person name="Kierzek A.M."/>
            <person name="Arakawa H."/>
            <person name="Bezzubov Y."/>
            <person name="Zaim J."/>
            <person name="Fiedler P."/>
            <person name="Kutter S."/>
            <person name="Blagodatski A."/>
            <person name="Kostovska D."/>
            <person name="Koter M."/>
            <person name="Plachy J."/>
            <person name="Carninci P."/>
            <person name="Hayashizaki Y."/>
            <person name="Buerstedde J.-M."/>
        </authorList>
    </citation>
    <scope>NUCLEOTIDE SEQUENCE [LARGE SCALE MRNA]</scope>
    <source>
        <strain>CB</strain>
        <tissue>Bursa of Fabricius</tissue>
    </source>
</reference>
<accession>Q5ZJG8</accession>